<evidence type="ECO:0000250" key="1"/>
<evidence type="ECO:0000305" key="2"/>
<gene>
    <name type="primary">phoU</name>
    <name type="ordered locus">XF_2145</name>
</gene>
<feature type="chain" id="PRO_0000155184" description="Phosphate-specific transport system accessory protein PhoU homolog">
    <location>
        <begin position="1"/>
        <end position="236"/>
    </location>
</feature>
<organism>
    <name type="scientific">Xylella fastidiosa (strain 9a5c)</name>
    <dbReference type="NCBI Taxonomy" id="160492"/>
    <lineage>
        <taxon>Bacteria</taxon>
        <taxon>Pseudomonadati</taxon>
        <taxon>Pseudomonadota</taxon>
        <taxon>Gammaproteobacteria</taxon>
        <taxon>Lysobacterales</taxon>
        <taxon>Lysobacteraceae</taxon>
        <taxon>Xylella</taxon>
    </lineage>
</organism>
<protein>
    <recommendedName>
        <fullName>Phosphate-specific transport system accessory protein PhoU homolog</fullName>
        <shortName>Pst system accessory protein PhoU homolog</shortName>
    </recommendedName>
</protein>
<sequence>MNTSYNYHIVKSYDDELNRLVTEIIRMGEIAVAQLEAALDVVERRDDKAADRIVMNDEAIDALEQSISHDVMRLALRGPMARDLREILAGLRIPADIERIGDYAANVAKRSIALNTMPPLPQTASLRALGQLSAQAVRNSLLSYSNKDEQIATKVRENDARLDAQYTALFRELLTYMMEDTRNITPCIHLLFMAKNLERIGDHATNIAENVLFLLNGEQMLPPREKCDNTSNVNLD</sequence>
<keyword id="KW-0963">Cytoplasm</keyword>
<keyword id="KW-0592">Phosphate transport</keyword>
<keyword id="KW-0813">Transport</keyword>
<proteinExistence type="inferred from homology"/>
<reference key="1">
    <citation type="journal article" date="2000" name="Nature">
        <title>The genome sequence of the plant pathogen Xylella fastidiosa.</title>
        <authorList>
            <person name="Simpson A.J.G."/>
            <person name="Reinach F.C."/>
            <person name="Arruda P."/>
            <person name="Abreu F.A."/>
            <person name="Acencio M."/>
            <person name="Alvarenga R."/>
            <person name="Alves L.M.C."/>
            <person name="Araya J.E."/>
            <person name="Baia G.S."/>
            <person name="Baptista C.S."/>
            <person name="Barros M.H."/>
            <person name="Bonaccorsi E.D."/>
            <person name="Bordin S."/>
            <person name="Bove J.M."/>
            <person name="Briones M.R.S."/>
            <person name="Bueno M.R.P."/>
            <person name="Camargo A.A."/>
            <person name="Camargo L.E.A."/>
            <person name="Carraro D.M."/>
            <person name="Carrer H."/>
            <person name="Colauto N.B."/>
            <person name="Colombo C."/>
            <person name="Costa F.F."/>
            <person name="Costa M.C.R."/>
            <person name="Costa-Neto C.M."/>
            <person name="Coutinho L.L."/>
            <person name="Cristofani M."/>
            <person name="Dias-Neto E."/>
            <person name="Docena C."/>
            <person name="El-Dorry H."/>
            <person name="Facincani A.P."/>
            <person name="Ferreira A.J.S."/>
            <person name="Ferreira V.C.A."/>
            <person name="Ferro J.A."/>
            <person name="Fraga J.S."/>
            <person name="Franca S.C."/>
            <person name="Franco M.C."/>
            <person name="Frohme M."/>
            <person name="Furlan L.R."/>
            <person name="Garnier M."/>
            <person name="Goldman G.H."/>
            <person name="Goldman M.H.S."/>
            <person name="Gomes S.L."/>
            <person name="Gruber A."/>
            <person name="Ho P.L."/>
            <person name="Hoheisel J.D."/>
            <person name="Junqueira M.L."/>
            <person name="Kemper E.L."/>
            <person name="Kitajima J.P."/>
            <person name="Krieger J.E."/>
            <person name="Kuramae E.E."/>
            <person name="Laigret F."/>
            <person name="Lambais M.R."/>
            <person name="Leite L.C.C."/>
            <person name="Lemos E.G.M."/>
            <person name="Lemos M.V.F."/>
            <person name="Lopes S.A."/>
            <person name="Lopes C.R."/>
            <person name="Machado J.A."/>
            <person name="Machado M.A."/>
            <person name="Madeira A.M.B.N."/>
            <person name="Madeira H.M.F."/>
            <person name="Marino C.L."/>
            <person name="Marques M.V."/>
            <person name="Martins E.A.L."/>
            <person name="Martins E.M.F."/>
            <person name="Matsukuma A.Y."/>
            <person name="Menck C.F.M."/>
            <person name="Miracca E.C."/>
            <person name="Miyaki C.Y."/>
            <person name="Monteiro-Vitorello C.B."/>
            <person name="Moon D.H."/>
            <person name="Nagai M.A."/>
            <person name="Nascimento A.L.T.O."/>
            <person name="Netto L.E.S."/>
            <person name="Nhani A. Jr."/>
            <person name="Nobrega F.G."/>
            <person name="Nunes L.R."/>
            <person name="Oliveira M.A."/>
            <person name="de Oliveira M.C."/>
            <person name="de Oliveira R.C."/>
            <person name="Palmieri D.A."/>
            <person name="Paris A."/>
            <person name="Peixoto B.R."/>
            <person name="Pereira G.A.G."/>
            <person name="Pereira H.A. Jr."/>
            <person name="Pesquero J.B."/>
            <person name="Quaggio R.B."/>
            <person name="Roberto P.G."/>
            <person name="Rodrigues V."/>
            <person name="de Rosa A.J.M."/>
            <person name="de Rosa V.E. Jr."/>
            <person name="de Sa R.G."/>
            <person name="Santelli R.V."/>
            <person name="Sawasaki H.E."/>
            <person name="da Silva A.C.R."/>
            <person name="da Silva A.M."/>
            <person name="da Silva F.R."/>
            <person name="Silva W.A. Jr."/>
            <person name="da Silveira J.F."/>
            <person name="Silvestri M.L.Z."/>
            <person name="Siqueira W.J."/>
            <person name="de Souza A.A."/>
            <person name="de Souza A.P."/>
            <person name="Terenzi M.F."/>
            <person name="Truffi D."/>
            <person name="Tsai S.M."/>
            <person name="Tsuhako M.H."/>
            <person name="Vallada H."/>
            <person name="Van Sluys M.A."/>
            <person name="Verjovski-Almeida S."/>
            <person name="Vettore A.L."/>
            <person name="Zago M.A."/>
            <person name="Zatz M."/>
            <person name="Meidanis J."/>
            <person name="Setubal J.C."/>
        </authorList>
    </citation>
    <scope>NUCLEOTIDE SEQUENCE [LARGE SCALE GENOMIC DNA]</scope>
    <source>
        <strain>9a5c</strain>
    </source>
</reference>
<comment type="function">
    <text evidence="1">Plays a role in the regulation of phosphate uptake.</text>
</comment>
<comment type="subunit">
    <text evidence="1">Homodimer.</text>
</comment>
<comment type="subcellular location">
    <subcellularLocation>
        <location evidence="1">Cytoplasm</location>
    </subcellularLocation>
</comment>
<comment type="similarity">
    <text evidence="2">Belongs to the PhoU family.</text>
</comment>
<name>PHOU_XYLFA</name>
<accession>Q9PBJ9</accession>
<dbReference type="EMBL" id="AE003849">
    <property type="protein sequence ID" value="AAF84944.1"/>
    <property type="molecule type" value="Genomic_DNA"/>
</dbReference>
<dbReference type="PIR" id="E82593">
    <property type="entry name" value="E82593"/>
</dbReference>
<dbReference type="RefSeq" id="WP_010894594.1">
    <property type="nucleotide sequence ID" value="NC_002488.3"/>
</dbReference>
<dbReference type="SMR" id="Q9PBJ9"/>
<dbReference type="STRING" id="160492.XF_2145"/>
<dbReference type="KEGG" id="xfa:XF_2145"/>
<dbReference type="eggNOG" id="COG0704">
    <property type="taxonomic scope" value="Bacteria"/>
</dbReference>
<dbReference type="HOGENOM" id="CLU_078518_2_1_6"/>
<dbReference type="Proteomes" id="UP000000812">
    <property type="component" value="Chromosome"/>
</dbReference>
<dbReference type="GO" id="GO:0005737">
    <property type="term" value="C:cytoplasm"/>
    <property type="evidence" value="ECO:0000250"/>
    <property type="project" value="UniProtKB"/>
</dbReference>
<dbReference type="GO" id="GO:0042803">
    <property type="term" value="F:protein homodimerization activity"/>
    <property type="evidence" value="ECO:0000250"/>
    <property type="project" value="UniProtKB"/>
</dbReference>
<dbReference type="GO" id="GO:0030643">
    <property type="term" value="P:intracellular phosphate ion homeostasis"/>
    <property type="evidence" value="ECO:0007669"/>
    <property type="project" value="InterPro"/>
</dbReference>
<dbReference type="GO" id="GO:0045936">
    <property type="term" value="P:negative regulation of phosphate metabolic process"/>
    <property type="evidence" value="ECO:0000250"/>
    <property type="project" value="UniProtKB"/>
</dbReference>
<dbReference type="GO" id="GO:2000186">
    <property type="term" value="P:negative regulation of phosphate transmembrane transport"/>
    <property type="evidence" value="ECO:0000250"/>
    <property type="project" value="UniProtKB"/>
</dbReference>
<dbReference type="GO" id="GO:0006817">
    <property type="term" value="P:phosphate ion transport"/>
    <property type="evidence" value="ECO:0007669"/>
    <property type="project" value="UniProtKB-KW"/>
</dbReference>
<dbReference type="FunFam" id="1.20.58.220:FF:000004">
    <property type="entry name" value="Phosphate-specific transport system accessory protein PhoU"/>
    <property type="match status" value="1"/>
</dbReference>
<dbReference type="Gene3D" id="1.20.58.220">
    <property type="entry name" value="Phosphate transport system protein phou homolog 2, domain 2"/>
    <property type="match status" value="1"/>
</dbReference>
<dbReference type="InterPro" id="IPR028366">
    <property type="entry name" value="P_transport_PhoU"/>
</dbReference>
<dbReference type="InterPro" id="IPR038078">
    <property type="entry name" value="PhoU-like_sf"/>
</dbReference>
<dbReference type="InterPro" id="IPR026022">
    <property type="entry name" value="PhoU_dom"/>
</dbReference>
<dbReference type="NCBIfam" id="TIGR02135">
    <property type="entry name" value="phoU_full"/>
    <property type="match status" value="1"/>
</dbReference>
<dbReference type="PANTHER" id="PTHR42930">
    <property type="entry name" value="PHOSPHATE-SPECIFIC TRANSPORT SYSTEM ACCESSORY PROTEIN PHOU"/>
    <property type="match status" value="1"/>
</dbReference>
<dbReference type="PANTHER" id="PTHR42930:SF3">
    <property type="entry name" value="PHOSPHATE-SPECIFIC TRANSPORT SYSTEM ACCESSORY PROTEIN PHOU"/>
    <property type="match status" value="1"/>
</dbReference>
<dbReference type="Pfam" id="PF01895">
    <property type="entry name" value="PhoU"/>
    <property type="match status" value="2"/>
</dbReference>
<dbReference type="PIRSF" id="PIRSF003107">
    <property type="entry name" value="PhoU"/>
    <property type="match status" value="1"/>
</dbReference>
<dbReference type="SUPFAM" id="SSF109755">
    <property type="entry name" value="PhoU-like"/>
    <property type="match status" value="1"/>
</dbReference>